<protein>
    <recommendedName>
        <fullName evidence="7">Probable xyloglucan galactosyltransferase GT12</fullName>
        <ecNumber evidence="7">2.4.1.-</ecNumber>
    </recommendedName>
    <alternativeName>
        <fullName evidence="6">Glycosyltransferase 12</fullName>
        <shortName evidence="6">AtGT12</shortName>
    </alternativeName>
</protein>
<proteinExistence type="evidence at transcript level"/>
<gene>
    <name evidence="6" type="primary">GT12</name>
    <name evidence="8" type="ordered locus">At2g32750</name>
</gene>
<evidence type="ECO:0000250" key="1">
    <source>
        <dbReference type="UniProtKB" id="F4K6F1"/>
    </source>
</evidence>
<evidence type="ECO:0000250" key="2">
    <source>
        <dbReference type="UniProtKB" id="Q7XJ98"/>
    </source>
</evidence>
<evidence type="ECO:0000255" key="3"/>
<evidence type="ECO:0000255" key="4">
    <source>
        <dbReference type="PROSITE-ProRule" id="PRU00498"/>
    </source>
</evidence>
<evidence type="ECO:0000269" key="5">
    <source>
    </source>
</evidence>
<evidence type="ECO:0000303" key="6">
    <source>
    </source>
</evidence>
<evidence type="ECO:0000305" key="7"/>
<evidence type="ECO:0000312" key="8">
    <source>
        <dbReference type="Araport" id="AT2G32750"/>
    </source>
</evidence>
<organism>
    <name type="scientific">Arabidopsis thaliana</name>
    <name type="common">Mouse-ear cress</name>
    <dbReference type="NCBI Taxonomy" id="3702"/>
    <lineage>
        <taxon>Eukaryota</taxon>
        <taxon>Viridiplantae</taxon>
        <taxon>Streptophyta</taxon>
        <taxon>Embryophyta</taxon>
        <taxon>Tracheophyta</taxon>
        <taxon>Spermatophyta</taxon>
        <taxon>Magnoliopsida</taxon>
        <taxon>eudicotyledons</taxon>
        <taxon>Gunneridae</taxon>
        <taxon>Pentapetalae</taxon>
        <taxon>rosids</taxon>
        <taxon>malvids</taxon>
        <taxon>Brassicales</taxon>
        <taxon>Brassicaceae</taxon>
        <taxon>Camelineae</taxon>
        <taxon>Arabidopsis</taxon>
    </lineage>
</organism>
<dbReference type="EC" id="2.4.1.-" evidence="7"/>
<dbReference type="EMBL" id="KJ138877">
    <property type="protein sequence ID" value="AHL38817.1"/>
    <property type="molecule type" value="mRNA"/>
</dbReference>
<dbReference type="EMBL" id="AC003974">
    <property type="protein sequence ID" value="AAC04488.1"/>
    <property type="molecule type" value="Genomic_DNA"/>
</dbReference>
<dbReference type="EMBL" id="CP002685">
    <property type="protein sequence ID" value="AEC08732.1"/>
    <property type="molecule type" value="Genomic_DNA"/>
</dbReference>
<dbReference type="PIR" id="T00793">
    <property type="entry name" value="T00793"/>
</dbReference>
<dbReference type="RefSeq" id="NP_180834.1">
    <property type="nucleotide sequence ID" value="NM_128834.2"/>
</dbReference>
<dbReference type="IntAct" id="O48842">
    <property type="interactions" value="1"/>
</dbReference>
<dbReference type="STRING" id="3702.O48842"/>
<dbReference type="CAZy" id="GT47">
    <property type="family name" value="Glycosyltransferase Family 47"/>
</dbReference>
<dbReference type="GlyCosmos" id="O48842">
    <property type="glycosylation" value="8 sites, No reported glycans"/>
</dbReference>
<dbReference type="GlyGen" id="O48842">
    <property type="glycosylation" value="8 sites"/>
</dbReference>
<dbReference type="PaxDb" id="3702-AT2G32750.1"/>
<dbReference type="EnsemblPlants" id="AT2G32750.1">
    <property type="protein sequence ID" value="AT2G32750.1"/>
    <property type="gene ID" value="AT2G32750"/>
</dbReference>
<dbReference type="GeneID" id="817835"/>
<dbReference type="Gramene" id="AT2G32750.1">
    <property type="protein sequence ID" value="AT2G32750.1"/>
    <property type="gene ID" value="AT2G32750"/>
</dbReference>
<dbReference type="KEGG" id="ath:AT2G32750"/>
<dbReference type="Araport" id="AT2G32750"/>
<dbReference type="TAIR" id="AT2G32750"/>
<dbReference type="eggNOG" id="KOG1021">
    <property type="taxonomic scope" value="Eukaryota"/>
</dbReference>
<dbReference type="HOGENOM" id="CLU_012659_4_1_1"/>
<dbReference type="InParanoid" id="O48842"/>
<dbReference type="OrthoDB" id="1924787at2759"/>
<dbReference type="PhylomeDB" id="O48842"/>
<dbReference type="PRO" id="PR:O48842"/>
<dbReference type="Proteomes" id="UP000006548">
    <property type="component" value="Chromosome 2"/>
</dbReference>
<dbReference type="ExpressionAtlas" id="O48842">
    <property type="expression patterns" value="baseline and differential"/>
</dbReference>
<dbReference type="GO" id="GO:0000139">
    <property type="term" value="C:Golgi membrane"/>
    <property type="evidence" value="ECO:0007669"/>
    <property type="project" value="UniProtKB-SubCell"/>
</dbReference>
<dbReference type="GO" id="GO:0016757">
    <property type="term" value="F:glycosyltransferase activity"/>
    <property type="evidence" value="ECO:0007669"/>
    <property type="project" value="UniProtKB-KW"/>
</dbReference>
<dbReference type="GO" id="GO:0006486">
    <property type="term" value="P:protein glycosylation"/>
    <property type="evidence" value="ECO:0007669"/>
    <property type="project" value="InterPro"/>
</dbReference>
<dbReference type="InterPro" id="IPR004263">
    <property type="entry name" value="Exostosin"/>
</dbReference>
<dbReference type="InterPro" id="IPR040911">
    <property type="entry name" value="Exostosin_GT47"/>
</dbReference>
<dbReference type="PANTHER" id="PTHR11062">
    <property type="entry name" value="EXOSTOSIN HEPARAN SULFATE GLYCOSYLTRANSFERASE -RELATED"/>
    <property type="match status" value="1"/>
</dbReference>
<dbReference type="PANTHER" id="PTHR11062:SF316">
    <property type="entry name" value="XYLOGLUCAN GALACTOSYLTRANSFERASE GT12-RELATED"/>
    <property type="match status" value="1"/>
</dbReference>
<dbReference type="Pfam" id="PF03016">
    <property type="entry name" value="Exostosin_GT47"/>
    <property type="match status" value="1"/>
</dbReference>
<sequence>MMKPVPKLWVVISSAFVFCLLVLFQINKSDLIEANLQITHQVNNFLISFVASSNNQILNHTKHANESDGIRAKQLEEEETDTCAGRYIYMYNLPSTFNDDIIKECRPLIKWFDMCPFMVNSGLGPQILVSDKTTARVLTVKTGSWYSTNQFLLSVIFRERMKHYECLTNNSSLASAIYVPYYAGFDVSRHLWGYNVTVRDELAIKLAQWLRERPEWGKMYGRDHFFVTGRIGWDFRRFHDEDSDWGSKLMLLPEFSNLTMLGIETTAWANEFAIPYPTYFHPKSLTEIWRWQKKVKSVKRKYLFSFVGGPRPKLDGSIRGEIIKQCLASHGKCNFLNCFVNDCDNPVKIMKVFENSVFCLQPSGDSYTRRSIFDSILAGCIPVFFSPGSGYNQYIWYFPKDYTKYSVYIPENEMRNGTVSLKNILGMIAKERILRMRKEVVKIIPKIIYNKPGFGPEKIEDAFDIAVDRMLERVAMVKRMMEEGKDVQSQYYSQTKDLKKLEIIHEKTA</sequence>
<comment type="function">
    <text evidence="1">Functions in xyloglucan synthesis by adding side chains to the xylosylated glucan backbone. Involved in the galactosylation of hemicellulose xyloglucan.</text>
</comment>
<comment type="subcellular location">
    <subcellularLocation>
        <location evidence="2">Golgi apparatus membrane</location>
        <topology evidence="2">Single-pass type II membrane protein</topology>
    </subcellularLocation>
</comment>
<comment type="tissue specificity">
    <text evidence="5">Expressed in pollen grains.</text>
</comment>
<comment type="similarity">
    <text evidence="7">Belongs to the glycosyltransferase 47 family.</text>
</comment>
<feature type="chain" id="PRO_0000435994" description="Probable xyloglucan galactosyltransferase GT12">
    <location>
        <begin position="1"/>
        <end position="509"/>
    </location>
</feature>
<feature type="topological domain" description="Cytoplasmic" evidence="7">
    <location>
        <begin position="1"/>
        <end position="3"/>
    </location>
</feature>
<feature type="transmembrane region" description="Helical; Signal-anchor for type II membrane protein" evidence="3">
    <location>
        <begin position="4"/>
        <end position="24"/>
    </location>
</feature>
<feature type="topological domain" description="Lumenal" evidence="7">
    <location>
        <begin position="25"/>
        <end position="509"/>
    </location>
</feature>
<feature type="glycosylation site" description="N-linked (GlcNAc...) asparagine" evidence="4">
    <location>
        <position position="27"/>
    </location>
</feature>
<feature type="glycosylation site" description="N-linked (GlcNAc...) asparagine" evidence="4">
    <location>
        <position position="59"/>
    </location>
</feature>
<feature type="glycosylation site" description="N-linked (GlcNAc...) asparagine" evidence="4">
    <location>
        <position position="65"/>
    </location>
</feature>
<feature type="glycosylation site" description="N-linked (GlcNAc...) asparagine" evidence="4">
    <location>
        <position position="169"/>
    </location>
</feature>
<feature type="glycosylation site" description="N-linked (GlcNAc...) asparagine" evidence="4">
    <location>
        <position position="170"/>
    </location>
</feature>
<feature type="glycosylation site" description="N-linked (GlcNAc...) asparagine" evidence="4">
    <location>
        <position position="195"/>
    </location>
</feature>
<feature type="glycosylation site" description="N-linked (GlcNAc...) asparagine" evidence="4">
    <location>
        <position position="257"/>
    </location>
</feature>
<feature type="glycosylation site" description="N-linked (GlcNAc...) asparagine" evidence="4">
    <location>
        <position position="416"/>
    </location>
</feature>
<keyword id="KW-0325">Glycoprotein</keyword>
<keyword id="KW-0328">Glycosyltransferase</keyword>
<keyword id="KW-0333">Golgi apparatus</keyword>
<keyword id="KW-0472">Membrane</keyword>
<keyword id="KW-1185">Reference proteome</keyword>
<keyword id="KW-0735">Signal-anchor</keyword>
<keyword id="KW-0808">Transferase</keyword>
<keyword id="KW-0812">Transmembrane</keyword>
<keyword id="KW-1133">Transmembrane helix</keyword>
<name>GT12_ARATH</name>
<accession>O48842</accession>
<reference key="1">
    <citation type="journal article" date="2014" name="Plant J.">
        <title>The plant glycosyltransferase clone collection for functional genomics.</title>
        <authorList>
            <person name="Lao J."/>
            <person name="Oikawa A."/>
            <person name="Bromley J.R."/>
            <person name="McInerney P."/>
            <person name="Suttangkakul A."/>
            <person name="Smith-Moritz A.M."/>
            <person name="Plahar H."/>
            <person name="Chiu T.-Y."/>
            <person name="Gonzalez Fernandez-Nino S.M.G."/>
            <person name="Ebert B."/>
            <person name="Yang F."/>
            <person name="Christiansen K.M."/>
            <person name="Hansen S.F."/>
            <person name="Stonebloom S."/>
            <person name="Adams P.D."/>
            <person name="Ronald P.C."/>
            <person name="Hillson N.J."/>
            <person name="Hadi M.Z."/>
            <person name="Vega-Sanchez M.E."/>
            <person name="Loque D."/>
            <person name="Scheller H.V."/>
            <person name="Heazlewood J.L."/>
        </authorList>
    </citation>
    <scope>NUCLEOTIDE SEQUENCE [MRNA]</scope>
    <source>
        <strain>cv. Columbia</strain>
    </source>
</reference>
<reference key="2">
    <citation type="journal article" date="1999" name="Nature">
        <title>Sequence and analysis of chromosome 2 of the plant Arabidopsis thaliana.</title>
        <authorList>
            <person name="Lin X."/>
            <person name="Kaul S."/>
            <person name="Rounsley S.D."/>
            <person name="Shea T.P."/>
            <person name="Benito M.-I."/>
            <person name="Town C.D."/>
            <person name="Fujii C.Y."/>
            <person name="Mason T.M."/>
            <person name="Bowman C.L."/>
            <person name="Barnstead M.E."/>
            <person name="Feldblyum T.V."/>
            <person name="Buell C.R."/>
            <person name="Ketchum K.A."/>
            <person name="Lee J.J."/>
            <person name="Ronning C.M."/>
            <person name="Koo H.L."/>
            <person name="Moffat K.S."/>
            <person name="Cronin L.A."/>
            <person name="Shen M."/>
            <person name="Pai G."/>
            <person name="Van Aken S."/>
            <person name="Umayam L."/>
            <person name="Tallon L.J."/>
            <person name="Gill J.E."/>
            <person name="Adams M.D."/>
            <person name="Carrera A.J."/>
            <person name="Creasy T.H."/>
            <person name="Goodman H.M."/>
            <person name="Somerville C.R."/>
            <person name="Copenhaver G.P."/>
            <person name="Preuss D."/>
            <person name="Nierman W.C."/>
            <person name="White O."/>
            <person name="Eisen J.A."/>
            <person name="Salzberg S.L."/>
            <person name="Fraser C.M."/>
            <person name="Venter J.C."/>
        </authorList>
    </citation>
    <scope>NUCLEOTIDE SEQUENCE [LARGE SCALE GENOMIC DNA]</scope>
    <source>
        <strain>cv. Columbia</strain>
    </source>
</reference>
<reference key="3">
    <citation type="journal article" date="2017" name="Plant J.">
        <title>Araport11: a complete reannotation of the Arabidopsis thaliana reference genome.</title>
        <authorList>
            <person name="Cheng C.Y."/>
            <person name="Krishnakumar V."/>
            <person name="Chan A.P."/>
            <person name="Thibaud-Nissen F."/>
            <person name="Schobel S."/>
            <person name="Town C.D."/>
        </authorList>
    </citation>
    <scope>GENOME REANNOTATION</scope>
    <source>
        <strain>cv. Columbia</strain>
    </source>
</reference>
<reference key="4">
    <citation type="journal article" date="2004" name="Plant Physiol.">
        <title>Molecular analysis of 10 coding regions from Arabidopsis that are homologous to the MUR3 xyloglucan galactosyltransferase.</title>
        <authorList>
            <person name="Li X."/>
            <person name="Cordero I."/>
            <person name="Caplan J."/>
            <person name="Moelhoej M."/>
            <person name="Reiter W.D."/>
        </authorList>
    </citation>
    <scope>TISSUE SPECIFICITY</scope>
</reference>